<accession>A7WZF5</accession>
<evidence type="ECO:0000255" key="1">
    <source>
        <dbReference type="HAMAP-Rule" id="MF_01006"/>
    </source>
</evidence>
<dbReference type="EC" id="3.6.1.27" evidence="1"/>
<dbReference type="EMBL" id="AP009324">
    <property type="protein sequence ID" value="BAF77563.1"/>
    <property type="molecule type" value="Genomic_DNA"/>
</dbReference>
<dbReference type="RefSeq" id="WP_000469894.1">
    <property type="nucleotide sequence ID" value="NC_009782.1"/>
</dbReference>
<dbReference type="SMR" id="A7WZF5"/>
<dbReference type="KEGG" id="saw:SAHV_0680"/>
<dbReference type="HOGENOM" id="CLU_060296_2_0_9"/>
<dbReference type="GO" id="GO:0005886">
    <property type="term" value="C:plasma membrane"/>
    <property type="evidence" value="ECO:0007669"/>
    <property type="project" value="UniProtKB-SubCell"/>
</dbReference>
<dbReference type="GO" id="GO:0050380">
    <property type="term" value="F:undecaprenyl-diphosphatase activity"/>
    <property type="evidence" value="ECO:0007669"/>
    <property type="project" value="UniProtKB-UniRule"/>
</dbReference>
<dbReference type="GO" id="GO:0071555">
    <property type="term" value="P:cell wall organization"/>
    <property type="evidence" value="ECO:0007669"/>
    <property type="project" value="UniProtKB-KW"/>
</dbReference>
<dbReference type="GO" id="GO:0009252">
    <property type="term" value="P:peptidoglycan biosynthetic process"/>
    <property type="evidence" value="ECO:0007669"/>
    <property type="project" value="UniProtKB-KW"/>
</dbReference>
<dbReference type="GO" id="GO:0008360">
    <property type="term" value="P:regulation of cell shape"/>
    <property type="evidence" value="ECO:0007669"/>
    <property type="project" value="UniProtKB-KW"/>
</dbReference>
<dbReference type="GO" id="GO:0046677">
    <property type="term" value="P:response to antibiotic"/>
    <property type="evidence" value="ECO:0007669"/>
    <property type="project" value="UniProtKB-UniRule"/>
</dbReference>
<dbReference type="HAMAP" id="MF_01006">
    <property type="entry name" value="Undec_diphosphatase"/>
    <property type="match status" value="1"/>
</dbReference>
<dbReference type="InterPro" id="IPR003824">
    <property type="entry name" value="UppP"/>
</dbReference>
<dbReference type="NCBIfam" id="NF001390">
    <property type="entry name" value="PRK00281.1-4"/>
    <property type="match status" value="1"/>
</dbReference>
<dbReference type="NCBIfam" id="TIGR00753">
    <property type="entry name" value="undec_PP_bacA"/>
    <property type="match status" value="1"/>
</dbReference>
<dbReference type="PANTHER" id="PTHR30622">
    <property type="entry name" value="UNDECAPRENYL-DIPHOSPHATASE"/>
    <property type="match status" value="1"/>
</dbReference>
<dbReference type="PANTHER" id="PTHR30622:SF3">
    <property type="entry name" value="UNDECAPRENYL-DIPHOSPHATASE"/>
    <property type="match status" value="1"/>
</dbReference>
<dbReference type="Pfam" id="PF02673">
    <property type="entry name" value="BacA"/>
    <property type="match status" value="1"/>
</dbReference>
<keyword id="KW-0046">Antibiotic resistance</keyword>
<keyword id="KW-1003">Cell membrane</keyword>
<keyword id="KW-0133">Cell shape</keyword>
<keyword id="KW-0961">Cell wall biogenesis/degradation</keyword>
<keyword id="KW-0378">Hydrolase</keyword>
<keyword id="KW-0472">Membrane</keyword>
<keyword id="KW-0573">Peptidoglycan synthesis</keyword>
<keyword id="KW-0812">Transmembrane</keyword>
<keyword id="KW-1133">Transmembrane helix</keyword>
<protein>
    <recommendedName>
        <fullName evidence="1">Undecaprenyl-diphosphatase</fullName>
        <ecNumber evidence="1">3.6.1.27</ecNumber>
    </recommendedName>
    <alternativeName>
        <fullName evidence="1">Bacitracin resistance protein</fullName>
    </alternativeName>
    <alternativeName>
        <fullName evidence="1">Undecaprenyl pyrophosphate phosphatase</fullName>
    </alternativeName>
</protein>
<gene>
    <name evidence="1" type="primary">uppP</name>
    <name type="ordered locus">SAHV_0680</name>
</gene>
<organism>
    <name type="scientific">Staphylococcus aureus (strain Mu3 / ATCC 700698)</name>
    <dbReference type="NCBI Taxonomy" id="418127"/>
    <lineage>
        <taxon>Bacteria</taxon>
        <taxon>Bacillati</taxon>
        <taxon>Bacillota</taxon>
        <taxon>Bacilli</taxon>
        <taxon>Bacillales</taxon>
        <taxon>Staphylococcaceae</taxon>
        <taxon>Staphylococcus</taxon>
    </lineage>
</organism>
<name>UPPP_STAA1</name>
<comment type="function">
    <text evidence="1">Catalyzes the dephosphorylation of undecaprenyl diphosphate (UPP). Confers resistance to bacitracin.</text>
</comment>
<comment type="catalytic activity">
    <reaction evidence="1">
        <text>di-trans,octa-cis-undecaprenyl diphosphate + H2O = di-trans,octa-cis-undecaprenyl phosphate + phosphate + H(+)</text>
        <dbReference type="Rhea" id="RHEA:28094"/>
        <dbReference type="ChEBI" id="CHEBI:15377"/>
        <dbReference type="ChEBI" id="CHEBI:15378"/>
        <dbReference type="ChEBI" id="CHEBI:43474"/>
        <dbReference type="ChEBI" id="CHEBI:58405"/>
        <dbReference type="ChEBI" id="CHEBI:60392"/>
        <dbReference type="EC" id="3.6.1.27"/>
    </reaction>
</comment>
<comment type="subcellular location">
    <subcellularLocation>
        <location evidence="1">Cell membrane</location>
        <topology evidence="1">Multi-pass membrane protein</topology>
    </subcellularLocation>
</comment>
<comment type="miscellaneous">
    <text>Bacitracin is thought to be involved in the inhibition of peptidoglycan synthesis by sequestering undecaprenyl diphosphate, thereby reducing the pool of lipid carrier available.</text>
</comment>
<comment type="similarity">
    <text evidence="1">Belongs to the UppP family.</text>
</comment>
<feature type="chain" id="PRO_1000062817" description="Undecaprenyl-diphosphatase">
    <location>
        <begin position="1"/>
        <end position="291"/>
    </location>
</feature>
<feature type="transmembrane region" description="Helical" evidence="1">
    <location>
        <begin position="1"/>
        <end position="21"/>
    </location>
</feature>
<feature type="transmembrane region" description="Helical" evidence="1">
    <location>
        <begin position="48"/>
        <end position="68"/>
    </location>
</feature>
<feature type="transmembrane region" description="Helical" evidence="1">
    <location>
        <begin position="102"/>
        <end position="122"/>
    </location>
</feature>
<feature type="transmembrane region" description="Helical" evidence="1">
    <location>
        <begin position="126"/>
        <end position="146"/>
    </location>
</feature>
<feature type="transmembrane region" description="Helical" evidence="1">
    <location>
        <begin position="162"/>
        <end position="182"/>
    </location>
</feature>
<feature type="transmembrane region" description="Helical" evidence="1">
    <location>
        <begin position="203"/>
        <end position="223"/>
    </location>
</feature>
<feature type="transmembrane region" description="Helical" evidence="1">
    <location>
        <begin position="231"/>
        <end position="251"/>
    </location>
</feature>
<feature type="transmembrane region" description="Helical" evidence="1">
    <location>
        <begin position="267"/>
        <end position="287"/>
    </location>
</feature>
<proteinExistence type="inferred from homology"/>
<reference key="1">
    <citation type="journal article" date="2008" name="Antimicrob. Agents Chemother.">
        <title>Mutated response regulator graR is responsible for phenotypic conversion of Staphylococcus aureus from heterogeneous vancomycin-intermediate resistance to vancomycin-intermediate resistance.</title>
        <authorList>
            <person name="Neoh H.-M."/>
            <person name="Cui L."/>
            <person name="Yuzawa H."/>
            <person name="Takeuchi F."/>
            <person name="Matsuo M."/>
            <person name="Hiramatsu K."/>
        </authorList>
    </citation>
    <scope>NUCLEOTIDE SEQUENCE [LARGE SCALE GENOMIC DNA]</scope>
    <source>
        <strain>Mu3 / ATCC 700698</strain>
    </source>
</reference>
<sequence length="291" mass="32339">MFIIELIKGIILGVVEGLTEFAPVSSTGHMILVDDMWLKSSEFLGSQSAFTFKIVIQLGSVFAAAWVFRERFLEILHIGKHKHVEGENDQQRRSKPRRLNLLHVLVGMVPAGILGLLFDDFIEEHLFSVPTVMIGLFVGAIYMIIADKYSVKVKNPQTVDQINYFQAFVIGISQAVAMWPGFSRSGSTISTGVLMKLNHKAASDFTFIMAVPIMLAASGLSLLKHYQDIQIADIPFYILGFLAAFTVGLIAIKTFLHLINKIKLIPFAIYRIVLVIFIAILYFGFGIGKGI</sequence>